<protein>
    <recommendedName>
        <fullName>Probable electron transfer flavoprotein subunit alpha, mitochondrial</fullName>
        <shortName>Alpha-ETF</shortName>
    </recommendedName>
</protein>
<feature type="transit peptide" description="Mitochondrion" evidence="2">
    <location>
        <begin position="1"/>
        <end status="unknown"/>
    </location>
</feature>
<feature type="chain" id="PRO_0000008658" description="Probable electron transfer flavoprotein subunit alpha, mitochondrial">
    <location>
        <begin status="unknown"/>
        <end position="346"/>
    </location>
</feature>
<feature type="binding site" evidence="2">
    <location>
        <begin position="285"/>
        <end position="313"/>
    </location>
    <ligand>
        <name>FAD</name>
        <dbReference type="ChEBI" id="CHEBI:57692"/>
    </ligand>
</feature>
<sequence length="346" mass="35907">MLYRSALRASCGFTPRLASTRSRLASSLVLLEHKAGRLNDASLSAVTAAKATGNDTHGILVGSMAEVEGVLKEAKKIKDLSKIYLATSDAYSHSLAEALAPLLASIVPTKDVSHVFAAHTAVGKNVFPRLAGMLDSSLVADIIALDPSRGTFTRPIYAGNAVLTVKSSPKDSVKIVTVRSTAFDKAAIADGSADVEDVEILAIESPTQFISEELTVSSRPDLASAARVVSGGRALKSKESFDKILDPLADSLGAAVGASRAAVDAGYADNSLQVGQTGKVVAPELYVAVGISGAIQHLAGMKESKMIVAINKDPDAPIFQVADVGLVADLFESVPQLVQEIGSIKA</sequence>
<gene>
    <name type="primary">ETF1</name>
</gene>
<evidence type="ECO:0000250" key="1"/>
<evidence type="ECO:0000255" key="2"/>
<evidence type="ECO:0000305" key="3"/>
<organism>
    <name type="scientific">Cryptococcus neoformans var. grubii</name>
    <name type="common">Filobasidiella neoformans var. grubii</name>
    <dbReference type="NCBI Taxonomy" id="178876"/>
    <lineage>
        <taxon>Eukaryota</taxon>
        <taxon>Fungi</taxon>
        <taxon>Dikarya</taxon>
        <taxon>Basidiomycota</taxon>
        <taxon>Agaricomycotina</taxon>
        <taxon>Tremellomycetes</taxon>
        <taxon>Tremellales</taxon>
        <taxon>Cryptococcaceae</taxon>
        <taxon>Cryptococcus</taxon>
        <taxon>Cryptococcus neoformans species complex</taxon>
    </lineage>
</organism>
<keyword id="KW-0249">Electron transport</keyword>
<keyword id="KW-0274">FAD</keyword>
<keyword id="KW-0285">Flavoprotein</keyword>
<keyword id="KW-0496">Mitochondrion</keyword>
<keyword id="KW-0809">Transit peptide</keyword>
<keyword id="KW-0813">Transport</keyword>
<proteinExistence type="inferred from homology"/>
<name>ETFA_CRYNV</name>
<accession>Q8J112</accession>
<dbReference type="EMBL" id="AF542528">
    <property type="protein sequence ID" value="AAN75158.1"/>
    <property type="molecule type" value="Genomic_DNA"/>
</dbReference>
<dbReference type="SMR" id="Q8J112"/>
<dbReference type="GO" id="GO:0005759">
    <property type="term" value="C:mitochondrial matrix"/>
    <property type="evidence" value="ECO:0007669"/>
    <property type="project" value="UniProtKB-SubCell"/>
</dbReference>
<dbReference type="GO" id="GO:0009055">
    <property type="term" value="F:electron transfer activity"/>
    <property type="evidence" value="ECO:0007669"/>
    <property type="project" value="InterPro"/>
</dbReference>
<dbReference type="GO" id="GO:0050660">
    <property type="term" value="F:flavin adenine dinucleotide binding"/>
    <property type="evidence" value="ECO:0007669"/>
    <property type="project" value="InterPro"/>
</dbReference>
<dbReference type="GO" id="GO:0033539">
    <property type="term" value="P:fatty acid beta-oxidation using acyl-CoA dehydrogenase"/>
    <property type="evidence" value="ECO:0007669"/>
    <property type="project" value="TreeGrafter"/>
</dbReference>
<dbReference type="CDD" id="cd01715">
    <property type="entry name" value="ETF_alpha"/>
    <property type="match status" value="1"/>
</dbReference>
<dbReference type="FunFam" id="3.40.50.1220:FF:000001">
    <property type="entry name" value="Electron transfer flavoprotein, alpha subunit"/>
    <property type="match status" value="1"/>
</dbReference>
<dbReference type="Gene3D" id="3.40.50.620">
    <property type="entry name" value="HUPs"/>
    <property type="match status" value="1"/>
</dbReference>
<dbReference type="Gene3D" id="3.40.50.1220">
    <property type="entry name" value="TPP-binding domain"/>
    <property type="match status" value="1"/>
</dbReference>
<dbReference type="InterPro" id="IPR029035">
    <property type="entry name" value="DHS-like_NAD/FAD-binding_dom"/>
</dbReference>
<dbReference type="InterPro" id="IPR014730">
    <property type="entry name" value="ETF_a/b_N"/>
</dbReference>
<dbReference type="InterPro" id="IPR001308">
    <property type="entry name" value="ETF_a/FixB"/>
</dbReference>
<dbReference type="InterPro" id="IPR033947">
    <property type="entry name" value="ETF_alpha_N"/>
</dbReference>
<dbReference type="InterPro" id="IPR014731">
    <property type="entry name" value="ETF_asu_C"/>
</dbReference>
<dbReference type="InterPro" id="IPR018206">
    <property type="entry name" value="ETF_asu_C_CS"/>
</dbReference>
<dbReference type="InterPro" id="IPR014729">
    <property type="entry name" value="Rossmann-like_a/b/a_fold"/>
</dbReference>
<dbReference type="PANTHER" id="PTHR43153">
    <property type="entry name" value="ELECTRON TRANSFER FLAVOPROTEIN ALPHA"/>
    <property type="match status" value="1"/>
</dbReference>
<dbReference type="PANTHER" id="PTHR43153:SF1">
    <property type="entry name" value="ELECTRON TRANSFER FLAVOPROTEIN SUBUNIT ALPHA, MITOCHONDRIAL"/>
    <property type="match status" value="1"/>
</dbReference>
<dbReference type="Pfam" id="PF01012">
    <property type="entry name" value="ETF"/>
    <property type="match status" value="1"/>
</dbReference>
<dbReference type="Pfam" id="PF00766">
    <property type="entry name" value="ETF_alpha"/>
    <property type="match status" value="1"/>
</dbReference>
<dbReference type="PIRSF" id="PIRSF000089">
    <property type="entry name" value="Electra_flavoP_a"/>
    <property type="match status" value="1"/>
</dbReference>
<dbReference type="SMART" id="SM00893">
    <property type="entry name" value="ETF"/>
    <property type="match status" value="1"/>
</dbReference>
<dbReference type="SUPFAM" id="SSF52402">
    <property type="entry name" value="Adenine nucleotide alpha hydrolases-like"/>
    <property type="match status" value="1"/>
</dbReference>
<dbReference type="SUPFAM" id="SSF52467">
    <property type="entry name" value="DHS-like NAD/FAD-binding domain"/>
    <property type="match status" value="1"/>
</dbReference>
<dbReference type="PROSITE" id="PS00696">
    <property type="entry name" value="ETF_ALPHA"/>
    <property type="match status" value="1"/>
</dbReference>
<comment type="function">
    <text evidence="1">The electron transfer flavoprotein serves as a specific electron acceptor for several dehydrogenases, including five acyl-CoA dehydrogenases, glutaryl-CoA and sarcosine dehydrogenase. It transfers the electrons to the main mitochondrial respiratory chain via ETF-ubiquinone oxidoreductase (ETF dehydrogenase) (By similarity).</text>
</comment>
<comment type="cofactor">
    <cofactor evidence="1">
        <name>FAD</name>
        <dbReference type="ChEBI" id="CHEBI:57692"/>
    </cofactor>
    <text evidence="1">Binds 1 FAD per dimer.</text>
</comment>
<comment type="subunit">
    <text evidence="1">Heterodimer of an alpha and a beta subunit.</text>
</comment>
<comment type="subcellular location">
    <subcellularLocation>
        <location evidence="1">Mitochondrion matrix</location>
    </subcellularLocation>
</comment>
<comment type="similarity">
    <text evidence="3">Belongs to the ETF alpha-subunit/FixB family.</text>
</comment>
<reference key="1">
    <citation type="journal article" date="2004" name="PLoS Biol.">
        <title>Convergent evolution of chromosomal sex-determining regions in the animal and fungal kingdoms.</title>
        <authorList>
            <person name="Fraser J.A."/>
            <person name="Diezmann S."/>
            <person name="Subaran R.L."/>
            <person name="Allen A."/>
            <person name="Lengeler K.B."/>
            <person name="Dietrich F.S."/>
            <person name="Heitman J."/>
        </authorList>
    </citation>
    <scope>NUCLEOTIDE SEQUENCE [GENOMIC DNA]</scope>
    <source>
        <strain>125.91</strain>
    </source>
</reference>